<name>ADD_SHESM</name>
<accession>Q0HD92</accession>
<evidence type="ECO:0000255" key="1">
    <source>
        <dbReference type="HAMAP-Rule" id="MF_00540"/>
    </source>
</evidence>
<protein>
    <recommendedName>
        <fullName evidence="1">Adenosine deaminase</fullName>
        <ecNumber evidence="1">3.5.4.4</ecNumber>
    </recommendedName>
    <alternativeName>
        <fullName evidence="1">Adenosine aminohydrolase</fullName>
    </alternativeName>
</protein>
<organism>
    <name type="scientific">Shewanella sp. (strain MR-4)</name>
    <dbReference type="NCBI Taxonomy" id="60480"/>
    <lineage>
        <taxon>Bacteria</taxon>
        <taxon>Pseudomonadati</taxon>
        <taxon>Pseudomonadota</taxon>
        <taxon>Gammaproteobacteria</taxon>
        <taxon>Alteromonadales</taxon>
        <taxon>Shewanellaceae</taxon>
        <taxon>Shewanella</taxon>
    </lineage>
</organism>
<keyword id="KW-0378">Hydrolase</keyword>
<keyword id="KW-0479">Metal-binding</keyword>
<keyword id="KW-0546">Nucleotide metabolism</keyword>
<keyword id="KW-0862">Zinc</keyword>
<gene>
    <name evidence="1" type="primary">add</name>
    <name type="ordered locus">Shewmr4_3912</name>
</gene>
<comment type="function">
    <text evidence="1">Catalyzes the hydrolytic deamination of adenosine and 2-deoxyadenosine.</text>
</comment>
<comment type="catalytic activity">
    <reaction evidence="1">
        <text>adenosine + H2O + H(+) = inosine + NH4(+)</text>
        <dbReference type="Rhea" id="RHEA:24408"/>
        <dbReference type="ChEBI" id="CHEBI:15377"/>
        <dbReference type="ChEBI" id="CHEBI:15378"/>
        <dbReference type="ChEBI" id="CHEBI:16335"/>
        <dbReference type="ChEBI" id="CHEBI:17596"/>
        <dbReference type="ChEBI" id="CHEBI:28938"/>
        <dbReference type="EC" id="3.5.4.4"/>
    </reaction>
    <physiologicalReaction direction="left-to-right" evidence="1">
        <dbReference type="Rhea" id="RHEA:24409"/>
    </physiologicalReaction>
</comment>
<comment type="catalytic activity">
    <reaction evidence="1">
        <text>2'-deoxyadenosine + H2O + H(+) = 2'-deoxyinosine + NH4(+)</text>
        <dbReference type="Rhea" id="RHEA:28190"/>
        <dbReference type="ChEBI" id="CHEBI:15377"/>
        <dbReference type="ChEBI" id="CHEBI:15378"/>
        <dbReference type="ChEBI" id="CHEBI:17256"/>
        <dbReference type="ChEBI" id="CHEBI:28938"/>
        <dbReference type="ChEBI" id="CHEBI:28997"/>
        <dbReference type="EC" id="3.5.4.4"/>
    </reaction>
    <physiologicalReaction direction="left-to-right" evidence="1">
        <dbReference type="Rhea" id="RHEA:28191"/>
    </physiologicalReaction>
</comment>
<comment type="cofactor">
    <cofactor evidence="1">
        <name>Zn(2+)</name>
        <dbReference type="ChEBI" id="CHEBI:29105"/>
    </cofactor>
    <text evidence="1">Binds 1 zinc ion per subunit.</text>
</comment>
<comment type="similarity">
    <text evidence="1">Belongs to the metallo-dependent hydrolases superfamily. Adenosine and AMP deaminases family. Adenosine deaminase subfamily.</text>
</comment>
<reference key="1">
    <citation type="submission" date="2006-08" db="EMBL/GenBank/DDBJ databases">
        <title>Complete sequence of Shewanella sp. MR-4.</title>
        <authorList>
            <consortium name="US DOE Joint Genome Institute"/>
            <person name="Copeland A."/>
            <person name="Lucas S."/>
            <person name="Lapidus A."/>
            <person name="Barry K."/>
            <person name="Detter J.C."/>
            <person name="Glavina del Rio T."/>
            <person name="Hammon N."/>
            <person name="Israni S."/>
            <person name="Dalin E."/>
            <person name="Tice H."/>
            <person name="Pitluck S."/>
            <person name="Kiss H."/>
            <person name="Brettin T."/>
            <person name="Bruce D."/>
            <person name="Han C."/>
            <person name="Tapia R."/>
            <person name="Gilna P."/>
            <person name="Schmutz J."/>
            <person name="Larimer F."/>
            <person name="Land M."/>
            <person name="Hauser L."/>
            <person name="Kyrpides N."/>
            <person name="Mikhailova N."/>
            <person name="Nealson K."/>
            <person name="Konstantinidis K."/>
            <person name="Klappenbach J."/>
            <person name="Tiedje J."/>
            <person name="Richardson P."/>
        </authorList>
    </citation>
    <scope>NUCLEOTIDE SEQUENCE [LARGE SCALE GENOMIC DNA]</scope>
    <source>
        <strain>MR-4</strain>
    </source>
</reference>
<dbReference type="EC" id="3.5.4.4" evidence="1"/>
<dbReference type="EMBL" id="CP000446">
    <property type="protein sequence ID" value="ABI40975.1"/>
    <property type="molecule type" value="Genomic_DNA"/>
</dbReference>
<dbReference type="RefSeq" id="WP_011624633.1">
    <property type="nucleotide sequence ID" value="NC_008321.1"/>
</dbReference>
<dbReference type="SMR" id="Q0HD92"/>
<dbReference type="KEGG" id="she:Shewmr4_3912"/>
<dbReference type="HOGENOM" id="CLU_039228_0_2_6"/>
<dbReference type="GO" id="GO:0005829">
    <property type="term" value="C:cytosol"/>
    <property type="evidence" value="ECO:0007669"/>
    <property type="project" value="TreeGrafter"/>
</dbReference>
<dbReference type="GO" id="GO:0046936">
    <property type="term" value="F:2'-deoxyadenosine deaminase activity"/>
    <property type="evidence" value="ECO:0007669"/>
    <property type="project" value="RHEA"/>
</dbReference>
<dbReference type="GO" id="GO:0004000">
    <property type="term" value="F:adenosine deaminase activity"/>
    <property type="evidence" value="ECO:0007669"/>
    <property type="project" value="UniProtKB-UniRule"/>
</dbReference>
<dbReference type="GO" id="GO:0008270">
    <property type="term" value="F:zinc ion binding"/>
    <property type="evidence" value="ECO:0007669"/>
    <property type="project" value="UniProtKB-UniRule"/>
</dbReference>
<dbReference type="GO" id="GO:0006154">
    <property type="term" value="P:adenosine catabolic process"/>
    <property type="evidence" value="ECO:0007669"/>
    <property type="project" value="TreeGrafter"/>
</dbReference>
<dbReference type="GO" id="GO:0043103">
    <property type="term" value="P:hypoxanthine salvage"/>
    <property type="evidence" value="ECO:0007669"/>
    <property type="project" value="TreeGrafter"/>
</dbReference>
<dbReference type="GO" id="GO:0046103">
    <property type="term" value="P:inosine biosynthetic process"/>
    <property type="evidence" value="ECO:0007669"/>
    <property type="project" value="TreeGrafter"/>
</dbReference>
<dbReference type="GO" id="GO:0009117">
    <property type="term" value="P:nucleotide metabolic process"/>
    <property type="evidence" value="ECO:0007669"/>
    <property type="project" value="UniProtKB-KW"/>
</dbReference>
<dbReference type="GO" id="GO:0009168">
    <property type="term" value="P:purine ribonucleoside monophosphate biosynthetic process"/>
    <property type="evidence" value="ECO:0007669"/>
    <property type="project" value="UniProtKB-UniRule"/>
</dbReference>
<dbReference type="FunFam" id="3.20.20.140:FF:000009">
    <property type="entry name" value="Adenosine deaminase"/>
    <property type="match status" value="1"/>
</dbReference>
<dbReference type="Gene3D" id="3.20.20.140">
    <property type="entry name" value="Metal-dependent hydrolases"/>
    <property type="match status" value="1"/>
</dbReference>
<dbReference type="HAMAP" id="MF_00540">
    <property type="entry name" value="A_deaminase"/>
    <property type="match status" value="1"/>
</dbReference>
<dbReference type="InterPro" id="IPR006650">
    <property type="entry name" value="A/AMP_deam_AS"/>
</dbReference>
<dbReference type="InterPro" id="IPR028893">
    <property type="entry name" value="A_deaminase"/>
</dbReference>
<dbReference type="InterPro" id="IPR001365">
    <property type="entry name" value="A_deaminase_dom"/>
</dbReference>
<dbReference type="InterPro" id="IPR006330">
    <property type="entry name" value="Ado/ade_deaminase"/>
</dbReference>
<dbReference type="InterPro" id="IPR032466">
    <property type="entry name" value="Metal_Hydrolase"/>
</dbReference>
<dbReference type="NCBIfam" id="TIGR01430">
    <property type="entry name" value="aden_deam"/>
    <property type="match status" value="1"/>
</dbReference>
<dbReference type="NCBIfam" id="NF006846">
    <property type="entry name" value="PRK09358.1-1"/>
    <property type="match status" value="1"/>
</dbReference>
<dbReference type="PANTHER" id="PTHR11409">
    <property type="entry name" value="ADENOSINE DEAMINASE"/>
    <property type="match status" value="1"/>
</dbReference>
<dbReference type="PANTHER" id="PTHR11409:SF43">
    <property type="entry name" value="ADENOSINE DEAMINASE"/>
    <property type="match status" value="1"/>
</dbReference>
<dbReference type="Pfam" id="PF00962">
    <property type="entry name" value="A_deaminase"/>
    <property type="match status" value="1"/>
</dbReference>
<dbReference type="SUPFAM" id="SSF51556">
    <property type="entry name" value="Metallo-dependent hydrolases"/>
    <property type="match status" value="1"/>
</dbReference>
<dbReference type="PROSITE" id="PS00485">
    <property type="entry name" value="A_DEAMINASE"/>
    <property type="match status" value="1"/>
</dbReference>
<sequence length="331" mass="36218">MINTSIPLVDLHRHLDGNVRVNTIWELGHQHGIALPADSLETLAPFVQIQGKETSLVAFLKKLDWMVAVLADLDAVKRVAYENVADAALSGLDYAELRFSPYYMAMNHKLPIEGVVEAVIDGVKAGLKDYQVKINLIGIMSRSFGQAACTQELEGLLAHKQHLVAMDLAGDELGFPGELFNEHFKRVRDAGLAITAHAGEAAGSQSMWQAIQELGATRIGHGVNAIHDPKLMEYLAKHRIGIESCPTSNLHTSTVSSYAEHPFRTFMDAGVLISLNTDDPGVSAIDIKHEYRIAKSELRLSDAELAQVQRNGVEMAFLSESERKALYAAKA</sequence>
<proteinExistence type="inferred from homology"/>
<feature type="chain" id="PRO_1000017701" description="Adenosine deaminase">
    <location>
        <begin position="1"/>
        <end position="331"/>
    </location>
</feature>
<feature type="active site" description="Proton donor" evidence="1">
    <location>
        <position position="200"/>
    </location>
</feature>
<feature type="binding site" evidence="1">
    <location>
        <position position="12"/>
    </location>
    <ligand>
        <name>Zn(2+)</name>
        <dbReference type="ChEBI" id="CHEBI:29105"/>
        <note>catalytic</note>
    </ligand>
</feature>
<feature type="binding site" evidence="1">
    <location>
        <position position="14"/>
    </location>
    <ligand>
        <name>substrate</name>
    </ligand>
</feature>
<feature type="binding site" evidence="1">
    <location>
        <position position="14"/>
    </location>
    <ligand>
        <name>Zn(2+)</name>
        <dbReference type="ChEBI" id="CHEBI:29105"/>
        <note>catalytic</note>
    </ligand>
</feature>
<feature type="binding site" evidence="1">
    <location>
        <position position="16"/>
    </location>
    <ligand>
        <name>substrate</name>
    </ligand>
</feature>
<feature type="binding site" evidence="1">
    <location>
        <position position="170"/>
    </location>
    <ligand>
        <name>substrate</name>
    </ligand>
</feature>
<feature type="binding site" evidence="1">
    <location>
        <position position="197"/>
    </location>
    <ligand>
        <name>Zn(2+)</name>
        <dbReference type="ChEBI" id="CHEBI:29105"/>
        <note>catalytic</note>
    </ligand>
</feature>
<feature type="binding site" evidence="1">
    <location>
        <position position="278"/>
    </location>
    <ligand>
        <name>Zn(2+)</name>
        <dbReference type="ChEBI" id="CHEBI:29105"/>
        <note>catalytic</note>
    </ligand>
</feature>
<feature type="binding site" evidence="1">
    <location>
        <position position="279"/>
    </location>
    <ligand>
        <name>substrate</name>
    </ligand>
</feature>
<feature type="site" description="Important for catalytic activity" evidence="1">
    <location>
        <position position="221"/>
    </location>
</feature>